<proteinExistence type="inferred from homology"/>
<dbReference type="EMBL" id="CP000266">
    <property type="protein sequence ID" value="ABF05775.1"/>
    <property type="molecule type" value="Genomic_DNA"/>
</dbReference>
<dbReference type="RefSeq" id="WP_001052219.1">
    <property type="nucleotide sequence ID" value="NC_008258.1"/>
</dbReference>
<dbReference type="SMR" id="Q0SYU0"/>
<dbReference type="GeneID" id="93778231"/>
<dbReference type="KEGG" id="sfv:SFV_3762"/>
<dbReference type="HOGENOM" id="CLU_079215_4_5_6"/>
<dbReference type="Proteomes" id="UP000000659">
    <property type="component" value="Chromosome"/>
</dbReference>
<dbReference type="GO" id="GO:0005886">
    <property type="term" value="C:plasma membrane"/>
    <property type="evidence" value="ECO:0007669"/>
    <property type="project" value="UniProtKB-SubCell"/>
</dbReference>
<dbReference type="GO" id="GO:0045259">
    <property type="term" value="C:proton-transporting ATP synthase complex"/>
    <property type="evidence" value="ECO:0007669"/>
    <property type="project" value="UniProtKB-KW"/>
</dbReference>
<dbReference type="GO" id="GO:0046933">
    <property type="term" value="F:proton-transporting ATP synthase activity, rotational mechanism"/>
    <property type="evidence" value="ECO:0007669"/>
    <property type="project" value="UniProtKB-UniRule"/>
</dbReference>
<dbReference type="GO" id="GO:0046961">
    <property type="term" value="F:proton-transporting ATPase activity, rotational mechanism"/>
    <property type="evidence" value="ECO:0007669"/>
    <property type="project" value="TreeGrafter"/>
</dbReference>
<dbReference type="CDD" id="cd06503">
    <property type="entry name" value="ATP-synt_Fo_b"/>
    <property type="match status" value="1"/>
</dbReference>
<dbReference type="FunFam" id="1.20.5.620:FF:000001">
    <property type="entry name" value="ATP synthase subunit b"/>
    <property type="match status" value="1"/>
</dbReference>
<dbReference type="Gene3D" id="1.20.5.620">
    <property type="entry name" value="F1F0 ATP synthase subunit B, membrane domain"/>
    <property type="match status" value="1"/>
</dbReference>
<dbReference type="HAMAP" id="MF_01398">
    <property type="entry name" value="ATP_synth_b_bprime"/>
    <property type="match status" value="1"/>
</dbReference>
<dbReference type="InterPro" id="IPR028987">
    <property type="entry name" value="ATP_synth_B-like_membr_sf"/>
</dbReference>
<dbReference type="InterPro" id="IPR002146">
    <property type="entry name" value="ATP_synth_b/b'su_bac/chlpt"/>
</dbReference>
<dbReference type="InterPro" id="IPR005864">
    <property type="entry name" value="ATP_synth_F0_bsu_bac"/>
</dbReference>
<dbReference type="InterPro" id="IPR050059">
    <property type="entry name" value="ATP_synthase_B_chain"/>
</dbReference>
<dbReference type="NCBIfam" id="TIGR01144">
    <property type="entry name" value="ATP_synt_b"/>
    <property type="match status" value="1"/>
</dbReference>
<dbReference type="NCBIfam" id="NF004411">
    <property type="entry name" value="PRK05759.1-2"/>
    <property type="match status" value="1"/>
</dbReference>
<dbReference type="NCBIfam" id="NF004413">
    <property type="entry name" value="PRK05759.1-4"/>
    <property type="match status" value="1"/>
</dbReference>
<dbReference type="PANTHER" id="PTHR33445:SF1">
    <property type="entry name" value="ATP SYNTHASE SUBUNIT B"/>
    <property type="match status" value="1"/>
</dbReference>
<dbReference type="PANTHER" id="PTHR33445">
    <property type="entry name" value="ATP SYNTHASE SUBUNIT B', CHLOROPLASTIC"/>
    <property type="match status" value="1"/>
</dbReference>
<dbReference type="Pfam" id="PF00430">
    <property type="entry name" value="ATP-synt_B"/>
    <property type="match status" value="1"/>
</dbReference>
<dbReference type="SUPFAM" id="SSF81573">
    <property type="entry name" value="F1F0 ATP synthase subunit B, membrane domain"/>
    <property type="match status" value="1"/>
</dbReference>
<organism>
    <name type="scientific">Shigella flexneri serotype 5b (strain 8401)</name>
    <dbReference type="NCBI Taxonomy" id="373384"/>
    <lineage>
        <taxon>Bacteria</taxon>
        <taxon>Pseudomonadati</taxon>
        <taxon>Pseudomonadota</taxon>
        <taxon>Gammaproteobacteria</taxon>
        <taxon>Enterobacterales</taxon>
        <taxon>Enterobacteriaceae</taxon>
        <taxon>Shigella</taxon>
    </lineage>
</organism>
<evidence type="ECO:0000255" key="1">
    <source>
        <dbReference type="HAMAP-Rule" id="MF_01398"/>
    </source>
</evidence>
<keyword id="KW-0066">ATP synthesis</keyword>
<keyword id="KW-0997">Cell inner membrane</keyword>
<keyword id="KW-1003">Cell membrane</keyword>
<keyword id="KW-0138">CF(0)</keyword>
<keyword id="KW-0375">Hydrogen ion transport</keyword>
<keyword id="KW-0406">Ion transport</keyword>
<keyword id="KW-0472">Membrane</keyword>
<keyword id="KW-0812">Transmembrane</keyword>
<keyword id="KW-1133">Transmembrane helix</keyword>
<keyword id="KW-0813">Transport</keyword>
<accession>Q0SYU0</accession>
<reference key="1">
    <citation type="journal article" date="2006" name="BMC Genomics">
        <title>Complete genome sequence of Shigella flexneri 5b and comparison with Shigella flexneri 2a.</title>
        <authorList>
            <person name="Nie H."/>
            <person name="Yang F."/>
            <person name="Zhang X."/>
            <person name="Yang J."/>
            <person name="Chen L."/>
            <person name="Wang J."/>
            <person name="Xiong Z."/>
            <person name="Peng J."/>
            <person name="Sun L."/>
            <person name="Dong J."/>
            <person name="Xue Y."/>
            <person name="Xu X."/>
            <person name="Chen S."/>
            <person name="Yao Z."/>
            <person name="Shen Y."/>
            <person name="Jin Q."/>
        </authorList>
    </citation>
    <scope>NUCLEOTIDE SEQUENCE [LARGE SCALE GENOMIC DNA]</scope>
    <source>
        <strain>8401</strain>
    </source>
</reference>
<name>ATPF_SHIF8</name>
<sequence>MNLNATILGQAIAFVLFVLFCMKYVWPPLMAAIEKRQKEIADGLASAERAHKDLDLAKASATDQLKKAKAEAQVIIEQANKRRSQILDEAKAEAEQERTKIVAQAQAEIEAERKRAREELRKQVAILAVAGAEKIIERSVDEAANSDIVDKLVAEL</sequence>
<feature type="chain" id="PRO_0000368773" description="ATP synthase subunit b">
    <location>
        <begin position="1"/>
        <end position="156"/>
    </location>
</feature>
<feature type="transmembrane region" description="Helical" evidence="1">
    <location>
        <begin position="11"/>
        <end position="31"/>
    </location>
</feature>
<comment type="function">
    <text evidence="1">F(1)F(0) ATP synthase produces ATP from ADP in the presence of a proton or sodium gradient. F-type ATPases consist of two structural domains, F(1) containing the extramembraneous catalytic core and F(0) containing the membrane proton channel, linked together by a central stalk and a peripheral stalk. During catalysis, ATP synthesis in the catalytic domain of F(1) is coupled via a rotary mechanism of the central stalk subunits to proton translocation.</text>
</comment>
<comment type="function">
    <text evidence="1">Component of the F(0) channel, it forms part of the peripheral stalk, linking F(1) to F(0).</text>
</comment>
<comment type="subunit">
    <text evidence="1">F-type ATPases have 2 components, F(1) - the catalytic core - and F(0) - the membrane proton channel. F(1) has five subunits: alpha(3), beta(3), gamma(1), delta(1), epsilon(1). F(0) has three main subunits: a(1), b(2) and c(10-14). The alpha and beta chains form an alternating ring which encloses part of the gamma chain. F(1) is attached to F(0) by a central stalk formed by the gamma and epsilon chains, while a peripheral stalk is formed by the delta and b chains.</text>
</comment>
<comment type="subcellular location">
    <subcellularLocation>
        <location evidence="1">Cell inner membrane</location>
        <topology evidence="1">Single-pass membrane protein</topology>
    </subcellularLocation>
</comment>
<comment type="similarity">
    <text evidence="1">Belongs to the ATPase B chain family.</text>
</comment>
<gene>
    <name evidence="1" type="primary">atpF</name>
    <name type="ordered locus">SFV_3762</name>
</gene>
<protein>
    <recommendedName>
        <fullName evidence="1">ATP synthase subunit b</fullName>
    </recommendedName>
    <alternativeName>
        <fullName evidence="1">ATP synthase F(0) sector subunit b</fullName>
    </alternativeName>
    <alternativeName>
        <fullName evidence="1">ATPase subunit I</fullName>
    </alternativeName>
    <alternativeName>
        <fullName evidence="1">F-type ATPase subunit b</fullName>
        <shortName evidence="1">F-ATPase subunit b</shortName>
    </alternativeName>
</protein>